<feature type="chain" id="PRO_1000120337" description="GMP synthase [glutamine-hydrolyzing]">
    <location>
        <begin position="1"/>
        <end position="525"/>
    </location>
</feature>
<feature type="domain" description="Glutamine amidotransferase type-1" evidence="1">
    <location>
        <begin position="16"/>
        <end position="205"/>
    </location>
</feature>
<feature type="domain" description="GMPS ATP-PPase" evidence="1">
    <location>
        <begin position="206"/>
        <end position="399"/>
    </location>
</feature>
<feature type="active site" description="Nucleophile" evidence="1">
    <location>
        <position position="93"/>
    </location>
</feature>
<feature type="active site" evidence="1">
    <location>
        <position position="179"/>
    </location>
</feature>
<feature type="active site" evidence="1">
    <location>
        <position position="181"/>
    </location>
</feature>
<feature type="binding site" evidence="1">
    <location>
        <begin position="233"/>
        <end position="239"/>
    </location>
    <ligand>
        <name>ATP</name>
        <dbReference type="ChEBI" id="CHEBI:30616"/>
    </ligand>
</feature>
<keyword id="KW-0067">ATP-binding</keyword>
<keyword id="KW-0315">Glutamine amidotransferase</keyword>
<keyword id="KW-0332">GMP biosynthesis</keyword>
<keyword id="KW-0436">Ligase</keyword>
<keyword id="KW-0547">Nucleotide-binding</keyword>
<keyword id="KW-0658">Purine biosynthesis</keyword>
<proteinExistence type="inferred from homology"/>
<name>GUAA_MYCBP</name>
<comment type="function">
    <text evidence="1">Catalyzes the synthesis of GMP from XMP.</text>
</comment>
<comment type="catalytic activity">
    <reaction evidence="1">
        <text>XMP + L-glutamine + ATP + H2O = GMP + L-glutamate + AMP + diphosphate + 2 H(+)</text>
        <dbReference type="Rhea" id="RHEA:11680"/>
        <dbReference type="ChEBI" id="CHEBI:15377"/>
        <dbReference type="ChEBI" id="CHEBI:15378"/>
        <dbReference type="ChEBI" id="CHEBI:29985"/>
        <dbReference type="ChEBI" id="CHEBI:30616"/>
        <dbReference type="ChEBI" id="CHEBI:33019"/>
        <dbReference type="ChEBI" id="CHEBI:57464"/>
        <dbReference type="ChEBI" id="CHEBI:58115"/>
        <dbReference type="ChEBI" id="CHEBI:58359"/>
        <dbReference type="ChEBI" id="CHEBI:456215"/>
        <dbReference type="EC" id="6.3.5.2"/>
    </reaction>
</comment>
<comment type="pathway">
    <text evidence="1">Purine metabolism; GMP biosynthesis; GMP from XMP (L-Gln route): step 1/1.</text>
</comment>
<comment type="subunit">
    <text evidence="1">Homodimer.</text>
</comment>
<dbReference type="EC" id="6.3.5.2" evidence="1"/>
<dbReference type="EMBL" id="AM408590">
    <property type="protein sequence ID" value="CAL73455.1"/>
    <property type="molecule type" value="Genomic_DNA"/>
</dbReference>
<dbReference type="RefSeq" id="WP_003417952.1">
    <property type="nucleotide sequence ID" value="NC_008769.1"/>
</dbReference>
<dbReference type="SMR" id="A1KP87"/>
<dbReference type="MEROPS" id="C26.A07"/>
<dbReference type="GeneID" id="45427392"/>
<dbReference type="KEGG" id="mbb:BCG_3466c"/>
<dbReference type="HOGENOM" id="CLU_014340_0_5_11"/>
<dbReference type="UniPathway" id="UPA00189">
    <property type="reaction ID" value="UER00296"/>
</dbReference>
<dbReference type="Proteomes" id="UP000001472">
    <property type="component" value="Chromosome"/>
</dbReference>
<dbReference type="GO" id="GO:0005829">
    <property type="term" value="C:cytosol"/>
    <property type="evidence" value="ECO:0007669"/>
    <property type="project" value="TreeGrafter"/>
</dbReference>
<dbReference type="GO" id="GO:0005524">
    <property type="term" value="F:ATP binding"/>
    <property type="evidence" value="ECO:0007669"/>
    <property type="project" value="UniProtKB-UniRule"/>
</dbReference>
<dbReference type="GO" id="GO:0003921">
    <property type="term" value="F:GMP synthase activity"/>
    <property type="evidence" value="ECO:0007669"/>
    <property type="project" value="InterPro"/>
</dbReference>
<dbReference type="CDD" id="cd01742">
    <property type="entry name" value="GATase1_GMP_Synthase"/>
    <property type="match status" value="1"/>
</dbReference>
<dbReference type="CDD" id="cd01997">
    <property type="entry name" value="GMP_synthase_C"/>
    <property type="match status" value="1"/>
</dbReference>
<dbReference type="FunFam" id="3.30.300.10:FF:000002">
    <property type="entry name" value="GMP synthase [glutamine-hydrolyzing]"/>
    <property type="match status" value="1"/>
</dbReference>
<dbReference type="FunFam" id="3.40.50.620:FF:000001">
    <property type="entry name" value="GMP synthase [glutamine-hydrolyzing]"/>
    <property type="match status" value="1"/>
</dbReference>
<dbReference type="FunFam" id="3.40.50.880:FF:000001">
    <property type="entry name" value="GMP synthase [glutamine-hydrolyzing]"/>
    <property type="match status" value="1"/>
</dbReference>
<dbReference type="Gene3D" id="3.30.300.10">
    <property type="match status" value="1"/>
</dbReference>
<dbReference type="Gene3D" id="3.40.50.880">
    <property type="match status" value="1"/>
</dbReference>
<dbReference type="Gene3D" id="3.40.50.620">
    <property type="entry name" value="HUPs"/>
    <property type="match status" value="1"/>
</dbReference>
<dbReference type="HAMAP" id="MF_00344">
    <property type="entry name" value="GMP_synthase"/>
    <property type="match status" value="1"/>
</dbReference>
<dbReference type="InterPro" id="IPR029062">
    <property type="entry name" value="Class_I_gatase-like"/>
</dbReference>
<dbReference type="InterPro" id="IPR017926">
    <property type="entry name" value="GATASE"/>
</dbReference>
<dbReference type="InterPro" id="IPR001674">
    <property type="entry name" value="GMP_synth_C"/>
</dbReference>
<dbReference type="InterPro" id="IPR004739">
    <property type="entry name" value="GMP_synth_GATase"/>
</dbReference>
<dbReference type="InterPro" id="IPR022955">
    <property type="entry name" value="GMP_synthase"/>
</dbReference>
<dbReference type="InterPro" id="IPR025777">
    <property type="entry name" value="GMPS_ATP_PPase_dom"/>
</dbReference>
<dbReference type="InterPro" id="IPR022310">
    <property type="entry name" value="NAD/GMP_synthase"/>
</dbReference>
<dbReference type="InterPro" id="IPR014729">
    <property type="entry name" value="Rossmann-like_a/b/a_fold"/>
</dbReference>
<dbReference type="NCBIfam" id="TIGR00884">
    <property type="entry name" value="guaA_Cterm"/>
    <property type="match status" value="1"/>
</dbReference>
<dbReference type="NCBIfam" id="TIGR00888">
    <property type="entry name" value="guaA_Nterm"/>
    <property type="match status" value="1"/>
</dbReference>
<dbReference type="NCBIfam" id="NF000848">
    <property type="entry name" value="PRK00074.1"/>
    <property type="match status" value="1"/>
</dbReference>
<dbReference type="PANTHER" id="PTHR11922:SF2">
    <property type="entry name" value="GMP SYNTHASE [GLUTAMINE-HYDROLYZING]"/>
    <property type="match status" value="1"/>
</dbReference>
<dbReference type="PANTHER" id="PTHR11922">
    <property type="entry name" value="GMP SYNTHASE-RELATED"/>
    <property type="match status" value="1"/>
</dbReference>
<dbReference type="Pfam" id="PF00117">
    <property type="entry name" value="GATase"/>
    <property type="match status" value="1"/>
</dbReference>
<dbReference type="Pfam" id="PF00958">
    <property type="entry name" value="GMP_synt_C"/>
    <property type="match status" value="1"/>
</dbReference>
<dbReference type="Pfam" id="PF02540">
    <property type="entry name" value="NAD_synthase"/>
    <property type="match status" value="1"/>
</dbReference>
<dbReference type="PRINTS" id="PR00097">
    <property type="entry name" value="ANTSNTHASEII"/>
</dbReference>
<dbReference type="PRINTS" id="PR00099">
    <property type="entry name" value="CPSGATASE"/>
</dbReference>
<dbReference type="PRINTS" id="PR00096">
    <property type="entry name" value="GATASE"/>
</dbReference>
<dbReference type="SUPFAM" id="SSF52402">
    <property type="entry name" value="Adenine nucleotide alpha hydrolases-like"/>
    <property type="match status" value="1"/>
</dbReference>
<dbReference type="SUPFAM" id="SSF52317">
    <property type="entry name" value="Class I glutamine amidotransferase-like"/>
    <property type="match status" value="1"/>
</dbReference>
<dbReference type="SUPFAM" id="SSF54810">
    <property type="entry name" value="GMP synthetase C-terminal dimerisation domain"/>
    <property type="match status" value="1"/>
</dbReference>
<dbReference type="PROSITE" id="PS51273">
    <property type="entry name" value="GATASE_TYPE_1"/>
    <property type="match status" value="1"/>
</dbReference>
<dbReference type="PROSITE" id="PS51553">
    <property type="entry name" value="GMPS_ATP_PPASE"/>
    <property type="match status" value="1"/>
</dbReference>
<protein>
    <recommendedName>
        <fullName evidence="1">GMP synthase [glutamine-hydrolyzing]</fullName>
        <ecNumber evidence="1">6.3.5.2</ecNumber>
    </recommendedName>
    <alternativeName>
        <fullName evidence="1">GMP synthetase</fullName>
    </alternativeName>
    <alternativeName>
        <fullName evidence="1">Glutamine amidotransferase</fullName>
    </alternativeName>
</protein>
<organism>
    <name type="scientific">Mycobacterium bovis (strain BCG / Pasteur 1173P2)</name>
    <dbReference type="NCBI Taxonomy" id="410289"/>
    <lineage>
        <taxon>Bacteria</taxon>
        <taxon>Bacillati</taxon>
        <taxon>Actinomycetota</taxon>
        <taxon>Actinomycetes</taxon>
        <taxon>Mycobacteriales</taxon>
        <taxon>Mycobacteriaceae</taxon>
        <taxon>Mycobacterium</taxon>
        <taxon>Mycobacterium tuberculosis complex</taxon>
    </lineage>
</organism>
<reference key="1">
    <citation type="journal article" date="2007" name="Proc. Natl. Acad. Sci. U.S.A.">
        <title>Genome plasticity of BCG and impact on vaccine efficacy.</title>
        <authorList>
            <person name="Brosch R."/>
            <person name="Gordon S.V."/>
            <person name="Garnier T."/>
            <person name="Eiglmeier K."/>
            <person name="Frigui W."/>
            <person name="Valenti P."/>
            <person name="Dos Santos S."/>
            <person name="Duthoy S."/>
            <person name="Lacroix C."/>
            <person name="Garcia-Pelayo C."/>
            <person name="Inwald J.K."/>
            <person name="Golby P."/>
            <person name="Garcia J.N."/>
            <person name="Hewinson R.G."/>
            <person name="Behr M.A."/>
            <person name="Quail M.A."/>
            <person name="Churcher C."/>
            <person name="Barrell B.G."/>
            <person name="Parkhill J."/>
            <person name="Cole S.T."/>
        </authorList>
    </citation>
    <scope>NUCLEOTIDE SEQUENCE [LARGE SCALE GENOMIC DNA]</scope>
    <source>
        <strain>BCG / Pasteur 1173P2</strain>
    </source>
</reference>
<gene>
    <name evidence="1" type="primary">guaA</name>
    <name type="ordered locus">BCG_3466c</name>
</gene>
<evidence type="ECO:0000255" key="1">
    <source>
        <dbReference type="HAMAP-Rule" id="MF_00344"/>
    </source>
</evidence>
<accession>A1KP87</accession>
<sequence>MVQPADIDVPETPARPVLVVDFGAQYAQLIARRVREARVFSEVIPHTASIEEIRARQPVALVLSGGPASVYADGAPKLDPALLDLGVPVLGICYGFQAMAQALGGIVAHTGTREYGRTELKVLGGKLHSDLPEVQPVWMSHGDAVTAAPDGFDVVASSAGAPVAAFEAFDRRLAGVQYHPEVMHTPHGQQVLSRFLHDFAGLGAQWTPANIANALIEQVRTQIGDGHAICGLSGGVDSAVAAALVQRAIGDRLTCVFVDHGLLRAGERAQVQRDFVAATGANLVTVDAAETFLEALSGVSAPEGKRKIIGRQFIRAFEGAVRDVLDGKTAEFLVQGTLYPDVVESGGGSGTANIKSHHNVGGLPDDLKFTLVEPLRLLFKDEVRAVGRELGLPEEIVARQPFPGPGLGIRIVGEVTAKRLDTLRHADSIVREELTAAGLDNQIWQCPVVLLADVRSVGVQGDGRTYGHPIVLRPVSSEDAMTADWTRVPYEVLERISTRITNEVAEVNRVVLDITSKPPATIEWE</sequence>